<sequence>MKKFNQSLLATAMLLAAGGANAAAFQLAEVSTSGLGRAYAGEAAIADNASVVATNPALMSLFKTAQFSTGGVYIDSRINMNGDVTSYAQIITNQIGMKAIKDGSASQRNVVPGAFVPNLYFVAPVNDKFALGAGMNVNFGLKSEYDDSYDAGVFGGKTDLSAINLNLSGAYRVTEGLSLGLGVNAVYAKAQVERNAGLIADSVKDNQITSALSTQQEPFRDLKKYLPSKDKSVVSLQDRAAWGFGWNAGVMYQFNEANRIGLAYHSKVDIDFADRTATSLEANVIKEGKKGNLTFTLPDYLELSGFHQLTDKLAVHYSYKYTHWSRLTKLHASFEDGKKAFDKELQYSNNSRVALGASYNLYEKLTLRAGIAYDQAASRHHRSAAIPDTDRTWYSLGATYKFTPNLSVDLGYAYLKGKKVHFKEVKTIGDKRTLTLNTTANYTSQAHANLYGLNLNYSF</sequence>
<evidence type="ECO:0000305" key="1"/>
<keyword id="KW-0998">Cell outer membrane</keyword>
<keyword id="KW-0903">Direct protein sequencing</keyword>
<keyword id="KW-0472">Membrane</keyword>
<keyword id="KW-0732">Signal</keyword>
<keyword id="KW-0812">Transmembrane</keyword>
<keyword id="KW-1134">Transmembrane beta strand</keyword>
<name>OPP12_HAEIF</name>
<protein>
    <recommendedName>
        <fullName>Outer membrane protein P1</fullName>
        <shortName>OMP P1</shortName>
    </recommendedName>
</protein>
<organism>
    <name type="scientific">Haemophilus influenzae</name>
    <dbReference type="NCBI Taxonomy" id="727"/>
    <lineage>
        <taxon>Bacteria</taxon>
        <taxon>Pseudomonadati</taxon>
        <taxon>Pseudomonadota</taxon>
        <taxon>Gammaproteobacteria</taxon>
        <taxon>Pasteurellales</taxon>
        <taxon>Pasteurellaceae</taxon>
        <taxon>Haemophilus</taxon>
    </lineage>
</organism>
<proteinExistence type="evidence at protein level"/>
<reference key="1">
    <citation type="journal article" date="1988" name="Infect. Immun.">
        <title>Purification, cloning, and sequence of outer membrane protein P1 of Haemophilus influenzae type b.</title>
        <authorList>
            <person name="Munson R.S. Jr."/>
            <person name="Grass S."/>
        </authorList>
    </citation>
    <scope>NUCLEOTIDE SEQUENCE [GENOMIC DNA]</scope>
    <scope>PARTIAL PROTEIN SEQUENCE</scope>
    <source>
        <strain>Serotype B</strain>
    </source>
</reference>
<dbReference type="EMBL" id="J03381">
    <property type="protein sequence ID" value="AAA24990.1"/>
    <property type="molecule type" value="Genomic_DNA"/>
</dbReference>
<dbReference type="PIR" id="A30510">
    <property type="entry name" value="A28787"/>
</dbReference>
<dbReference type="RefSeq" id="WP_200143099.1">
    <property type="nucleotide sequence ID" value="NZ_JAEKFY010000001.1"/>
</dbReference>
<dbReference type="SMR" id="P10641"/>
<dbReference type="ABCD" id="P10641">
    <property type="antibodies" value="1 sequenced antibody"/>
</dbReference>
<dbReference type="GO" id="GO:0009279">
    <property type="term" value="C:cell outer membrane"/>
    <property type="evidence" value="ECO:0007669"/>
    <property type="project" value="UniProtKB-SubCell"/>
</dbReference>
<dbReference type="GO" id="GO:0015483">
    <property type="term" value="F:long-chain fatty acid transporting porin activity"/>
    <property type="evidence" value="ECO:0007669"/>
    <property type="project" value="TreeGrafter"/>
</dbReference>
<dbReference type="FunFam" id="2.40.160.60:FF:000009">
    <property type="entry name" value="Outer membrane protein P1"/>
    <property type="match status" value="1"/>
</dbReference>
<dbReference type="Gene3D" id="2.40.160.60">
    <property type="entry name" value="Outer membrane protein transport protein (OMPP1/FadL/TodX)"/>
    <property type="match status" value="1"/>
</dbReference>
<dbReference type="InterPro" id="IPR005017">
    <property type="entry name" value="OMPP1/FadL/TodX"/>
</dbReference>
<dbReference type="PANTHER" id="PTHR35093:SF3">
    <property type="entry name" value="LONG-CHAIN FATTY ACID TRANSPORT PROTEIN"/>
    <property type="match status" value="1"/>
</dbReference>
<dbReference type="PANTHER" id="PTHR35093">
    <property type="entry name" value="OUTER MEMBRANE PROTEIN NMB0088-RELATED"/>
    <property type="match status" value="1"/>
</dbReference>
<dbReference type="Pfam" id="PF03349">
    <property type="entry name" value="Toluene_X"/>
    <property type="match status" value="1"/>
</dbReference>
<dbReference type="SUPFAM" id="SSF56935">
    <property type="entry name" value="Porins"/>
    <property type="match status" value="1"/>
</dbReference>
<feature type="signal peptide">
    <location>
        <begin position="1"/>
        <end position="22"/>
    </location>
</feature>
<feature type="chain" id="PRO_0000025200" description="Outer membrane protein P1">
    <location>
        <begin position="23"/>
        <end position="459"/>
    </location>
</feature>
<comment type="subcellular location">
    <subcellularLocation>
        <location>Cell outer membrane</location>
        <topology>Multi-pass membrane protein</topology>
    </subcellularLocation>
</comment>
<comment type="similarity">
    <text evidence="1">Belongs to the OmpP1/FadL family.</text>
</comment>
<gene>
    <name type="primary">ompP1</name>
</gene>
<accession>P10641</accession>